<protein>
    <recommendedName>
        <fullName>Virulence sensor histidine kinase PhoQ</fullName>
        <ecNumber>2.7.13.3</ecNumber>
        <ecNumber>3.1.3.-</ecNumber>
    </recommendedName>
    <alternativeName>
        <fullName>Sensor histidine protein kinase/phosphatase PhoQ</fullName>
    </alternativeName>
</protein>
<comment type="function">
    <text evidence="5 6">Member of the two-component regulatory system PhoP/PhoQ which regulates the expression of genes involved in virulence, adaptation to acidic and low Mg(2+) environments and resistance to host defense antimicrobial peptides. Essential for intramacrophage survival of S.typhimurium. In low periplasmic Mg(2+), PhoQ functions as a membrane-associated protein kinase that undergoes autophosphorylation and subsequently transfers the phosphate to PhoP, resulting in the expression of PhoP-activated genes (PAG) and repression of PhoP-repressed genes (PRG). In high periplasmic Mg(2+), acts as a protein phosphatase that dephosphorylates phospho-PhoP, resulting in the repression of PAG and may lead to expression of some PRG. Essential for transcription of spiC inside macrophages by controlling the expression of the two-component regulatory system SsrB/SpiR (SsrA) and Pir at transcriptional and post-transcriptional levels respectively. Promotes expression of the two-component regulatory system PmrA/PmrB via activation of pmrD gene. Is required to attenuate bacterial growth within fibroblast cells and to enhance bacterial resistance to bile in intestinal cells. Negatively regulates prgH, which is required for invasion of epithelial cells (Probable). Involved in acid tolerance.</text>
</comment>
<comment type="catalytic activity">
    <reaction>
        <text>ATP + protein L-histidine = ADP + protein N-phospho-L-histidine.</text>
        <dbReference type="EC" id="2.7.13.3"/>
    </reaction>
</comment>
<comment type="cofactor">
    <cofactor evidence="1">
        <name>a divalent metal cation</name>
        <dbReference type="ChEBI" id="CHEBI:60240"/>
    </cofactor>
    <text evidence="1">Binds up to 3 divalent metal cations.</text>
</comment>
<comment type="subunit">
    <text evidence="1">Homodimer; probably dimerizes via the cytoplasmic domain. Interacts with MgrB in the periplasm, altering its activity and that of downstream effector PhoP (By similarity).</text>
</comment>
<comment type="subcellular location">
    <subcellularLocation>
        <location evidence="1">Cell inner membrane</location>
        <topology evidence="1">Multi-pass membrane protein</topology>
    </subcellularLocation>
</comment>
<comment type="induction">
    <text evidence="5">The phoP/phoQ operon is positively autoregulated by both PhoP and PhoQ in a Mg(2+)-dependent manner. Induced by low pH.</text>
</comment>
<comment type="disruption phenotype">
    <text evidence="5">Decreased tolerance to acid stress.</text>
</comment>
<comment type="miscellaneous">
    <text evidence="6">Substitutions experiments show that amino acid Thr-48 may be involved in the conformational changes responsible for the balance between kinase-dominant state and phosphatase-dominant state.</text>
</comment>
<comment type="miscellaneous">
    <text evidence="6">The PhoP/PhoQ-signaling cascade, which activates virulence membrane genes (pagC, pagO, pagD, pagK, pgtE and phoN), is induced by cationic antimicrobial peptides (CAMP) (polymyxin, alpha-helical peptide C18G and sheet peptide protegrin-1) at sublethal concentrations.</text>
</comment>
<gene>
    <name type="primary">phoQ</name>
    <name type="ordered locus">STMUK_1198</name>
</gene>
<sequence>MNKFARHFLPLSLRVRFLLATAGVVLVLSLAYGIVALVGYSVSFDKTTFRLLRGESNLFYTLAKWENNKISVELPENLDMQSPTMTLIYDETGKLLWTQRNIPWLIKSIQPEWLKTNGFHEIETNVDATSTLLSEDHSAQEKLKEVREDDDDAEMTHSVAVNIYPATARMPQLTIVVVDTIPIELKRSYMVWSWFVYVLAANLLLVIPLLWIAAWWSLRPIEALAREVRELEDHHREMLNPETTRELTSLVRNLNQLLKSERERYNKYRTTLTDLTHSLKTPLAVLQSTLRSLRNEKMSVSKAEPVMLEQISRISQQIGYYLHRASMRGSGVLLSRELHPVAPLLDNLISALNKVYQRKGVNISMDISPEISFVGEQNDFVEVMGNVLDNACKYCLEFVEISARQTDDHLHIFVEDDGPGIPHSKRSLVFDRGQRADTLRPGQGVGLAVAREITEQYAGQIIASDSLLGGARMEVVFGRQHPTQKEE</sequence>
<evidence type="ECO:0000250" key="1"/>
<evidence type="ECO:0000255" key="2"/>
<evidence type="ECO:0000255" key="3">
    <source>
        <dbReference type="PROSITE-ProRule" id="PRU00102"/>
    </source>
</evidence>
<evidence type="ECO:0000255" key="4">
    <source>
        <dbReference type="PROSITE-ProRule" id="PRU00107"/>
    </source>
</evidence>
<evidence type="ECO:0000269" key="5">
    <source>
    </source>
</evidence>
<evidence type="ECO:0000305" key="6"/>
<feature type="chain" id="PRO_0000424538" description="Virulence sensor histidine kinase PhoQ">
    <location>
        <begin position="1"/>
        <end position="487"/>
    </location>
</feature>
<feature type="transmembrane region" description="Helical" evidence="2">
    <location>
        <begin position="17"/>
        <end position="37"/>
    </location>
</feature>
<feature type="transmembrane region" description="Helical" evidence="2">
    <location>
        <begin position="194"/>
        <end position="214"/>
    </location>
</feature>
<feature type="domain" description="HAMP" evidence="3">
    <location>
        <begin position="215"/>
        <end position="266"/>
    </location>
</feature>
<feature type="domain" description="Histidine kinase" evidence="4">
    <location>
        <begin position="274"/>
        <end position="481"/>
    </location>
</feature>
<feature type="binding site" evidence="1">
    <location>
        <position position="151"/>
    </location>
    <ligand>
        <name>a divalent metal cation</name>
        <dbReference type="ChEBI" id="CHEBI:60240"/>
    </ligand>
</feature>
<feature type="binding site" evidence="1">
    <location>
        <position position="152"/>
    </location>
    <ligand>
        <name>a divalent metal cation</name>
        <dbReference type="ChEBI" id="CHEBI:60240"/>
    </ligand>
</feature>
<feature type="binding site" evidence="1">
    <location>
        <begin position="386"/>
        <end position="394"/>
    </location>
    <ligand>
        <name>ATP</name>
        <dbReference type="ChEBI" id="CHEBI:30616"/>
    </ligand>
</feature>
<feature type="binding site" evidence="1">
    <location>
        <position position="386"/>
    </location>
    <ligand>
        <name>Mg(2+)</name>
        <dbReference type="ChEBI" id="CHEBI:18420"/>
    </ligand>
</feature>
<feature type="binding site" evidence="1">
    <location>
        <begin position="416"/>
        <end position="421"/>
    </location>
    <ligand>
        <name>ATP</name>
        <dbReference type="ChEBI" id="CHEBI:30616"/>
    </ligand>
</feature>
<feature type="binding site" evidence="1">
    <location>
        <begin position="435"/>
        <end position="447"/>
    </location>
    <ligand>
        <name>ATP</name>
        <dbReference type="ChEBI" id="CHEBI:30616"/>
    </ligand>
</feature>
<feature type="binding site" evidence="1">
    <location>
        <position position="443"/>
    </location>
    <ligand>
        <name>Mg(2+)</name>
        <dbReference type="ChEBI" id="CHEBI:18420"/>
    </ligand>
</feature>
<feature type="site" description="Plays a critical role in the switching between kinase and phosphatase states" evidence="1">
    <location>
        <position position="202"/>
    </location>
</feature>
<feature type="modified residue" description="Phosphohistidine; by autocatalysis" evidence="4">
    <location>
        <position position="277"/>
    </location>
</feature>
<proteinExistence type="evidence at transcript level"/>
<reference key="1">
    <citation type="journal article" date="2011" name="J. Bacteriol.">
        <title>Complete genome sequence of the universal killer Salmonella enterica serovar typhimurium UK-1 (ATCC 68169).</title>
        <authorList>
            <person name="Luo Y."/>
            <person name="Kong Q."/>
            <person name="Yang J."/>
            <person name="Golden G."/>
            <person name="Wanda S.Y."/>
            <person name="Jensen R.V."/>
            <person name="Ernst P.B."/>
            <person name="Curtiss R. III"/>
        </authorList>
    </citation>
    <scope>NUCLEOTIDE SEQUENCE [LARGE SCALE GENOMIC DNA]</scope>
    <source>
        <strain>ATCC 68169 / UK-1</strain>
    </source>
</reference>
<reference key="2">
    <citation type="journal article" date="1998" name="J. Bacteriol.">
        <title>A low pH-inducible, PhoPQ-dependent acid tolerance response protects Salmonella typhimurium against inorganic acid stress.</title>
        <authorList>
            <person name="Bearson B.L."/>
            <person name="Wilson L."/>
            <person name="Foster J.W."/>
        </authorList>
    </citation>
    <scope>FUNCTION</scope>
    <scope>INDUCTION</scope>
    <scope>DISRUPTION PHENOTYPE</scope>
    <source>
        <strain>ATCC 68169 / UK-1</strain>
    </source>
</reference>
<organism>
    <name type="scientific">Salmonella typhimurium (strain ATCC 68169 / UK-1)</name>
    <dbReference type="NCBI Taxonomy" id="990282"/>
    <lineage>
        <taxon>Bacteria</taxon>
        <taxon>Pseudomonadati</taxon>
        <taxon>Pseudomonadota</taxon>
        <taxon>Gammaproteobacteria</taxon>
        <taxon>Enterobacterales</taxon>
        <taxon>Enterobacteriaceae</taxon>
        <taxon>Salmonella</taxon>
    </lineage>
</organism>
<accession>F5ZP94</accession>
<name>PHOQ_SALTU</name>
<keyword id="KW-0067">ATP-binding</keyword>
<keyword id="KW-0997">Cell inner membrane</keyword>
<keyword id="KW-1003">Cell membrane</keyword>
<keyword id="KW-0341">Growth regulation</keyword>
<keyword id="KW-0378">Hydrolase</keyword>
<keyword id="KW-0418">Kinase</keyword>
<keyword id="KW-0460">Magnesium</keyword>
<keyword id="KW-0472">Membrane</keyword>
<keyword id="KW-0479">Metal-binding</keyword>
<keyword id="KW-0547">Nucleotide-binding</keyword>
<keyword id="KW-0597">Phosphoprotein</keyword>
<keyword id="KW-0904">Protein phosphatase</keyword>
<keyword id="KW-0808">Transferase</keyword>
<keyword id="KW-0812">Transmembrane</keyword>
<keyword id="KW-1133">Transmembrane helix</keyword>
<keyword id="KW-0902">Two-component regulatory system</keyword>
<keyword id="KW-0843">Virulence</keyword>
<dbReference type="EC" id="2.7.13.3"/>
<dbReference type="EC" id="3.1.3.-"/>
<dbReference type="EMBL" id="CP002614">
    <property type="protein sequence ID" value="AEF07104.1"/>
    <property type="molecule type" value="Genomic_DNA"/>
</dbReference>
<dbReference type="RefSeq" id="WP_001031687.1">
    <property type="nucleotide sequence ID" value="NC_016863.1"/>
</dbReference>
<dbReference type="SMR" id="F5ZP94"/>
<dbReference type="KEGG" id="sej:STMUK_1198"/>
<dbReference type="PATRIC" id="fig|990282.4.peg.1249"/>
<dbReference type="HOGENOM" id="CLU_000445_42_0_6"/>
<dbReference type="Proteomes" id="UP000008278">
    <property type="component" value="Chromosome"/>
</dbReference>
<dbReference type="GO" id="GO:0005886">
    <property type="term" value="C:plasma membrane"/>
    <property type="evidence" value="ECO:0007669"/>
    <property type="project" value="UniProtKB-SubCell"/>
</dbReference>
<dbReference type="GO" id="GO:0005524">
    <property type="term" value="F:ATP binding"/>
    <property type="evidence" value="ECO:0007669"/>
    <property type="project" value="UniProtKB-KW"/>
</dbReference>
<dbReference type="GO" id="GO:0046872">
    <property type="term" value="F:metal ion binding"/>
    <property type="evidence" value="ECO:0007669"/>
    <property type="project" value="UniProtKB-KW"/>
</dbReference>
<dbReference type="GO" id="GO:0004721">
    <property type="term" value="F:phosphoprotein phosphatase activity"/>
    <property type="evidence" value="ECO:0007669"/>
    <property type="project" value="UniProtKB-KW"/>
</dbReference>
<dbReference type="GO" id="GO:0000155">
    <property type="term" value="F:phosphorelay sensor kinase activity"/>
    <property type="evidence" value="ECO:0007669"/>
    <property type="project" value="InterPro"/>
</dbReference>
<dbReference type="CDD" id="cd16954">
    <property type="entry name" value="HATPase_PhoQ-like"/>
    <property type="match status" value="1"/>
</dbReference>
<dbReference type="FunFam" id="1.10.287.130:FF:000013">
    <property type="entry name" value="Sensor histidine kinase PhoQ"/>
    <property type="match status" value="1"/>
</dbReference>
<dbReference type="FunFam" id="3.30.450.140:FF:000001">
    <property type="entry name" value="Virulence sensor histidine kinase PhoQ"/>
    <property type="match status" value="1"/>
</dbReference>
<dbReference type="FunFam" id="3.30.565.10:FF:000019">
    <property type="entry name" value="Virulence sensor histidine kinase PhoQ"/>
    <property type="match status" value="1"/>
</dbReference>
<dbReference type="Gene3D" id="1.10.287.130">
    <property type="match status" value="1"/>
</dbReference>
<dbReference type="Gene3D" id="3.30.450.140">
    <property type="match status" value="1"/>
</dbReference>
<dbReference type="Gene3D" id="3.30.565.10">
    <property type="entry name" value="Histidine kinase-like ATPase, C-terminal domain"/>
    <property type="match status" value="1"/>
</dbReference>
<dbReference type="InterPro" id="IPR003660">
    <property type="entry name" value="HAMP_dom"/>
</dbReference>
<dbReference type="InterPro" id="IPR036890">
    <property type="entry name" value="HATPase_C_sf"/>
</dbReference>
<dbReference type="InterPro" id="IPR005467">
    <property type="entry name" value="His_kinase_dom"/>
</dbReference>
<dbReference type="InterPro" id="IPR036097">
    <property type="entry name" value="HisK_dim/P_sf"/>
</dbReference>
<dbReference type="InterPro" id="IPR015014">
    <property type="entry name" value="PhoQ_Sensor"/>
</dbReference>
<dbReference type="InterPro" id="IPR038429">
    <property type="entry name" value="PhoQ_Sensor_sf"/>
</dbReference>
<dbReference type="InterPro" id="IPR004358">
    <property type="entry name" value="Sig_transdc_His_kin-like_C"/>
</dbReference>
<dbReference type="InterPro" id="IPR050428">
    <property type="entry name" value="TCS_sensor_his_kinase"/>
</dbReference>
<dbReference type="NCBIfam" id="NF008077">
    <property type="entry name" value="PRK10815.1"/>
    <property type="match status" value="1"/>
</dbReference>
<dbReference type="PANTHER" id="PTHR45436">
    <property type="entry name" value="SENSOR HISTIDINE KINASE YKOH"/>
    <property type="match status" value="1"/>
</dbReference>
<dbReference type="PANTHER" id="PTHR45436:SF4">
    <property type="entry name" value="SENSOR PROTEIN PHOQ"/>
    <property type="match status" value="1"/>
</dbReference>
<dbReference type="Pfam" id="PF02518">
    <property type="entry name" value="HATPase_c"/>
    <property type="match status" value="1"/>
</dbReference>
<dbReference type="Pfam" id="PF08918">
    <property type="entry name" value="PhoQ_Sensor"/>
    <property type="match status" value="1"/>
</dbReference>
<dbReference type="PRINTS" id="PR00344">
    <property type="entry name" value="BCTRLSENSOR"/>
</dbReference>
<dbReference type="SMART" id="SM00387">
    <property type="entry name" value="HATPase_c"/>
    <property type="match status" value="1"/>
</dbReference>
<dbReference type="SUPFAM" id="SSF55874">
    <property type="entry name" value="ATPase domain of HSP90 chaperone/DNA topoisomerase II/histidine kinase"/>
    <property type="match status" value="1"/>
</dbReference>
<dbReference type="SUPFAM" id="SSF47384">
    <property type="entry name" value="Homodimeric domain of signal transducing histidine kinase"/>
    <property type="match status" value="1"/>
</dbReference>
<dbReference type="PROSITE" id="PS50885">
    <property type="entry name" value="HAMP"/>
    <property type="match status" value="1"/>
</dbReference>
<dbReference type="PROSITE" id="PS50109">
    <property type="entry name" value="HIS_KIN"/>
    <property type="match status" value="1"/>
</dbReference>